<comment type="catalytic activity">
    <reaction evidence="1">
        <text>tRNA(Arg) + L-arginine + ATP = L-arginyl-tRNA(Arg) + AMP + diphosphate</text>
        <dbReference type="Rhea" id="RHEA:20301"/>
        <dbReference type="Rhea" id="RHEA-COMP:9658"/>
        <dbReference type="Rhea" id="RHEA-COMP:9673"/>
        <dbReference type="ChEBI" id="CHEBI:30616"/>
        <dbReference type="ChEBI" id="CHEBI:32682"/>
        <dbReference type="ChEBI" id="CHEBI:33019"/>
        <dbReference type="ChEBI" id="CHEBI:78442"/>
        <dbReference type="ChEBI" id="CHEBI:78513"/>
        <dbReference type="ChEBI" id="CHEBI:456215"/>
        <dbReference type="EC" id="6.1.1.19"/>
    </reaction>
</comment>
<comment type="subunit">
    <text evidence="1">Monomer.</text>
</comment>
<comment type="subcellular location">
    <subcellularLocation>
        <location evidence="1">Cytoplasm</location>
    </subcellularLocation>
</comment>
<comment type="similarity">
    <text evidence="1">Belongs to the class-I aminoacyl-tRNA synthetase family.</text>
</comment>
<name>SYR_CUPTR</name>
<gene>
    <name evidence="1" type="primary">argS</name>
    <name type="ordered locus">RALTA_A0102</name>
</gene>
<organism>
    <name type="scientific">Cupriavidus taiwanensis (strain DSM 17343 / BCRC 17206 / CCUG 44338 / CIP 107171 / LMG 19424 / R1)</name>
    <name type="common">Ralstonia taiwanensis (strain LMG 19424)</name>
    <dbReference type="NCBI Taxonomy" id="977880"/>
    <lineage>
        <taxon>Bacteria</taxon>
        <taxon>Pseudomonadati</taxon>
        <taxon>Pseudomonadota</taxon>
        <taxon>Betaproteobacteria</taxon>
        <taxon>Burkholderiales</taxon>
        <taxon>Burkholderiaceae</taxon>
        <taxon>Cupriavidus</taxon>
    </lineage>
</organism>
<evidence type="ECO:0000255" key="1">
    <source>
        <dbReference type="HAMAP-Rule" id="MF_00123"/>
    </source>
</evidence>
<keyword id="KW-0030">Aminoacyl-tRNA synthetase</keyword>
<keyword id="KW-0067">ATP-binding</keyword>
<keyword id="KW-0963">Cytoplasm</keyword>
<keyword id="KW-0436">Ligase</keyword>
<keyword id="KW-0547">Nucleotide-binding</keyword>
<keyword id="KW-0648">Protein biosynthesis</keyword>
<protein>
    <recommendedName>
        <fullName evidence="1">Arginine--tRNA ligase</fullName>
        <ecNumber evidence="1">6.1.1.19</ecNumber>
    </recommendedName>
    <alternativeName>
        <fullName evidence="1">Arginyl-tRNA synthetase</fullName>
        <shortName evidence="1">ArgRS</shortName>
    </alternativeName>
</protein>
<dbReference type="EC" id="6.1.1.19" evidence="1"/>
<dbReference type="EMBL" id="CU633749">
    <property type="protein sequence ID" value="CAP62775.1"/>
    <property type="molecule type" value="Genomic_DNA"/>
</dbReference>
<dbReference type="RefSeq" id="WP_012351443.1">
    <property type="nucleotide sequence ID" value="NC_010528.1"/>
</dbReference>
<dbReference type="SMR" id="B2AG76"/>
<dbReference type="GeneID" id="29762022"/>
<dbReference type="KEGG" id="cti:RALTA_A0102"/>
<dbReference type="eggNOG" id="COG0018">
    <property type="taxonomic scope" value="Bacteria"/>
</dbReference>
<dbReference type="HOGENOM" id="CLU_006406_0_1_4"/>
<dbReference type="BioCyc" id="CTAI977880:RALTA_RS00505-MONOMER"/>
<dbReference type="Proteomes" id="UP000001692">
    <property type="component" value="Chromosome 1"/>
</dbReference>
<dbReference type="GO" id="GO:0005737">
    <property type="term" value="C:cytoplasm"/>
    <property type="evidence" value="ECO:0007669"/>
    <property type="project" value="UniProtKB-SubCell"/>
</dbReference>
<dbReference type="GO" id="GO:0004814">
    <property type="term" value="F:arginine-tRNA ligase activity"/>
    <property type="evidence" value="ECO:0007669"/>
    <property type="project" value="UniProtKB-UniRule"/>
</dbReference>
<dbReference type="GO" id="GO:0005524">
    <property type="term" value="F:ATP binding"/>
    <property type="evidence" value="ECO:0007669"/>
    <property type="project" value="UniProtKB-UniRule"/>
</dbReference>
<dbReference type="GO" id="GO:0006420">
    <property type="term" value="P:arginyl-tRNA aminoacylation"/>
    <property type="evidence" value="ECO:0007669"/>
    <property type="project" value="UniProtKB-UniRule"/>
</dbReference>
<dbReference type="CDD" id="cd00671">
    <property type="entry name" value="ArgRS_core"/>
    <property type="match status" value="1"/>
</dbReference>
<dbReference type="FunFam" id="1.10.730.10:FF:000008">
    <property type="entry name" value="Arginine--tRNA ligase"/>
    <property type="match status" value="1"/>
</dbReference>
<dbReference type="FunFam" id="3.40.50.620:FF:000062">
    <property type="entry name" value="Arginine--tRNA ligase"/>
    <property type="match status" value="1"/>
</dbReference>
<dbReference type="Gene3D" id="3.30.1360.70">
    <property type="entry name" value="Arginyl tRNA synthetase N-terminal domain"/>
    <property type="match status" value="1"/>
</dbReference>
<dbReference type="Gene3D" id="3.40.50.620">
    <property type="entry name" value="HUPs"/>
    <property type="match status" value="1"/>
</dbReference>
<dbReference type="Gene3D" id="1.10.730.10">
    <property type="entry name" value="Isoleucyl-tRNA Synthetase, Domain 1"/>
    <property type="match status" value="1"/>
</dbReference>
<dbReference type="HAMAP" id="MF_00123">
    <property type="entry name" value="Arg_tRNA_synth"/>
    <property type="match status" value="1"/>
</dbReference>
<dbReference type="InterPro" id="IPR001412">
    <property type="entry name" value="aa-tRNA-synth_I_CS"/>
</dbReference>
<dbReference type="InterPro" id="IPR001278">
    <property type="entry name" value="Arg-tRNA-ligase"/>
</dbReference>
<dbReference type="InterPro" id="IPR005148">
    <property type="entry name" value="Arg-tRNA-synth_N"/>
</dbReference>
<dbReference type="InterPro" id="IPR036695">
    <property type="entry name" value="Arg-tRNA-synth_N_sf"/>
</dbReference>
<dbReference type="InterPro" id="IPR035684">
    <property type="entry name" value="ArgRS_core"/>
</dbReference>
<dbReference type="InterPro" id="IPR008909">
    <property type="entry name" value="DALR_anticod-bd"/>
</dbReference>
<dbReference type="InterPro" id="IPR014729">
    <property type="entry name" value="Rossmann-like_a/b/a_fold"/>
</dbReference>
<dbReference type="InterPro" id="IPR009080">
    <property type="entry name" value="tRNAsynth_Ia_anticodon-bd"/>
</dbReference>
<dbReference type="NCBIfam" id="TIGR00456">
    <property type="entry name" value="argS"/>
    <property type="match status" value="1"/>
</dbReference>
<dbReference type="PANTHER" id="PTHR11956:SF5">
    <property type="entry name" value="ARGININE--TRNA LIGASE, CYTOPLASMIC"/>
    <property type="match status" value="1"/>
</dbReference>
<dbReference type="PANTHER" id="PTHR11956">
    <property type="entry name" value="ARGINYL-TRNA SYNTHETASE"/>
    <property type="match status" value="1"/>
</dbReference>
<dbReference type="Pfam" id="PF03485">
    <property type="entry name" value="Arg_tRNA_synt_N"/>
    <property type="match status" value="1"/>
</dbReference>
<dbReference type="Pfam" id="PF05746">
    <property type="entry name" value="DALR_1"/>
    <property type="match status" value="1"/>
</dbReference>
<dbReference type="Pfam" id="PF00750">
    <property type="entry name" value="tRNA-synt_1d"/>
    <property type="match status" value="1"/>
</dbReference>
<dbReference type="PRINTS" id="PR01038">
    <property type="entry name" value="TRNASYNTHARG"/>
</dbReference>
<dbReference type="SMART" id="SM01016">
    <property type="entry name" value="Arg_tRNA_synt_N"/>
    <property type="match status" value="1"/>
</dbReference>
<dbReference type="SMART" id="SM00836">
    <property type="entry name" value="DALR_1"/>
    <property type="match status" value="1"/>
</dbReference>
<dbReference type="SUPFAM" id="SSF47323">
    <property type="entry name" value="Anticodon-binding domain of a subclass of class I aminoacyl-tRNA synthetases"/>
    <property type="match status" value="1"/>
</dbReference>
<dbReference type="SUPFAM" id="SSF55190">
    <property type="entry name" value="Arginyl-tRNA synthetase (ArgRS), N-terminal 'additional' domain"/>
    <property type="match status" value="1"/>
</dbReference>
<dbReference type="SUPFAM" id="SSF52374">
    <property type="entry name" value="Nucleotidylyl transferase"/>
    <property type="match status" value="1"/>
</dbReference>
<dbReference type="PROSITE" id="PS00178">
    <property type="entry name" value="AA_TRNA_LIGASE_I"/>
    <property type="match status" value="1"/>
</dbReference>
<accession>B2AG76</accession>
<proteinExistence type="inferred from homology"/>
<reference key="1">
    <citation type="journal article" date="2008" name="Genome Res.">
        <title>Genome sequence of the beta-rhizobium Cupriavidus taiwanensis and comparative genomics of rhizobia.</title>
        <authorList>
            <person name="Amadou C."/>
            <person name="Pascal G."/>
            <person name="Mangenot S."/>
            <person name="Glew M."/>
            <person name="Bontemps C."/>
            <person name="Capela D."/>
            <person name="Carrere S."/>
            <person name="Cruveiller S."/>
            <person name="Dossat C."/>
            <person name="Lajus A."/>
            <person name="Marchetti M."/>
            <person name="Poinsot V."/>
            <person name="Rouy Z."/>
            <person name="Servin B."/>
            <person name="Saad M."/>
            <person name="Schenowitz C."/>
            <person name="Barbe V."/>
            <person name="Batut J."/>
            <person name="Medigue C."/>
            <person name="Masson-Boivin C."/>
        </authorList>
    </citation>
    <scope>NUCLEOTIDE SEQUENCE [LARGE SCALE GENOMIC DNA]</scope>
    <source>
        <strain>DSM 17343 / BCRC 17206 / CCUG 44338 / CIP 107171 / LMG 19424 / R1</strain>
    </source>
</reference>
<sequence length="595" mass="64609">MLPVQTSNLAAAFTDAVRALAPADATLPAVTFERPKVAAHGDLACNVAMQVARALKSNPRELAQRIVAAVEADARAQGLVAGMDIAGPGFINLRLTPSAKADVLRAVLNEGDHYGARERGVHGQVLVEFVSANPTGPLHVGHGRQAALGDALANLLSWQGWHVHREFYYNDAGVQIQTLALSVQARARGLKPGDASWPEAAYNGDYIADIAADFLAGKTVSASDGEPVTASGNVEDIDSIRKFAVTYLRNEQDIDLQAFGVKFDRYYLESSLYSDGRVDAAVQSLIDKGKTYESEGALWLRTTDDGDDKDRVMKKSDGTYTYFVPDVAYHTTKWERGFTKVINVQGSDHHGTIARVRAGLQGLDIGIPQGYPDYVLHKMVTVMKNGEEVKISKRAGSYVTVRDLIEWSNGGDETIRGCLEQGVADWPAHFTRGRDAVRFFLLSRKADTEFVFDVDLALKQNDENPVYYVQYAHARICSIFESWGGADWESRLAELAGADLSAVTGADASAQALALGRRLAEFPDMLAAAAAELAPHAVAFYLRDLAGDFHAFYNADRVLVDDEAVKRARLALLAATRQVLRNGLAVIGVSAPRRM</sequence>
<feature type="chain" id="PRO_1000095356" description="Arginine--tRNA ligase">
    <location>
        <begin position="1"/>
        <end position="595"/>
    </location>
</feature>
<feature type="short sequence motif" description="'HIGH' region">
    <location>
        <begin position="132"/>
        <end position="142"/>
    </location>
</feature>